<feature type="chain" id="PRO_0000341819" description="2-succinyl-5-enolpyruvyl-6-hydroxy-3-cyclohexene-1-carboxylate synthase">
    <location>
        <begin position="1"/>
        <end position="591"/>
    </location>
</feature>
<dbReference type="EC" id="2.2.1.9" evidence="1"/>
<dbReference type="EMBL" id="CP000159">
    <property type="protein sequence ID" value="ABC44615.1"/>
    <property type="molecule type" value="Genomic_DNA"/>
</dbReference>
<dbReference type="RefSeq" id="WP_011404103.1">
    <property type="nucleotide sequence ID" value="NC_007677.1"/>
</dbReference>
<dbReference type="RefSeq" id="YP_445475.1">
    <property type="nucleotide sequence ID" value="NC_007677.1"/>
</dbReference>
<dbReference type="SMR" id="Q2S2V6"/>
<dbReference type="STRING" id="309807.SRU_1351"/>
<dbReference type="EnsemblBacteria" id="ABC44615">
    <property type="protein sequence ID" value="ABC44615"/>
    <property type="gene ID" value="SRU_1351"/>
</dbReference>
<dbReference type="GeneID" id="83728264"/>
<dbReference type="KEGG" id="sru:SRU_1351"/>
<dbReference type="PATRIC" id="fig|309807.25.peg.1405"/>
<dbReference type="eggNOG" id="COG1165">
    <property type="taxonomic scope" value="Bacteria"/>
</dbReference>
<dbReference type="HOGENOM" id="CLU_006051_3_0_10"/>
<dbReference type="OrthoDB" id="9791859at2"/>
<dbReference type="UniPathway" id="UPA00079"/>
<dbReference type="UniPathway" id="UPA01057">
    <property type="reaction ID" value="UER00164"/>
</dbReference>
<dbReference type="Proteomes" id="UP000008674">
    <property type="component" value="Chromosome"/>
</dbReference>
<dbReference type="GO" id="GO:0070204">
    <property type="term" value="F:2-succinyl-5-enolpyruvyl-6-hydroxy-3-cyclohexene-1-carboxylic-acid synthase activity"/>
    <property type="evidence" value="ECO:0007669"/>
    <property type="project" value="UniProtKB-UniRule"/>
</dbReference>
<dbReference type="GO" id="GO:0000287">
    <property type="term" value="F:magnesium ion binding"/>
    <property type="evidence" value="ECO:0007669"/>
    <property type="project" value="UniProtKB-UniRule"/>
</dbReference>
<dbReference type="GO" id="GO:0030145">
    <property type="term" value="F:manganese ion binding"/>
    <property type="evidence" value="ECO:0007669"/>
    <property type="project" value="UniProtKB-UniRule"/>
</dbReference>
<dbReference type="GO" id="GO:0030976">
    <property type="term" value="F:thiamine pyrophosphate binding"/>
    <property type="evidence" value="ECO:0007669"/>
    <property type="project" value="UniProtKB-UniRule"/>
</dbReference>
<dbReference type="GO" id="GO:0009234">
    <property type="term" value="P:menaquinone biosynthetic process"/>
    <property type="evidence" value="ECO:0007669"/>
    <property type="project" value="UniProtKB-UniRule"/>
</dbReference>
<dbReference type="CDD" id="cd07037">
    <property type="entry name" value="TPP_PYR_MenD"/>
    <property type="match status" value="1"/>
</dbReference>
<dbReference type="CDD" id="cd02009">
    <property type="entry name" value="TPP_SHCHC_synthase"/>
    <property type="match status" value="1"/>
</dbReference>
<dbReference type="Gene3D" id="3.40.50.970">
    <property type="match status" value="2"/>
</dbReference>
<dbReference type="Gene3D" id="3.40.50.1220">
    <property type="entry name" value="TPP-binding domain"/>
    <property type="match status" value="1"/>
</dbReference>
<dbReference type="HAMAP" id="MF_01659">
    <property type="entry name" value="MenD"/>
    <property type="match status" value="1"/>
</dbReference>
<dbReference type="InterPro" id="IPR029035">
    <property type="entry name" value="DHS-like_NAD/FAD-binding_dom"/>
</dbReference>
<dbReference type="InterPro" id="IPR004433">
    <property type="entry name" value="MenaQ_synth_MenD"/>
</dbReference>
<dbReference type="InterPro" id="IPR032264">
    <property type="entry name" value="MenD_middle"/>
</dbReference>
<dbReference type="InterPro" id="IPR029061">
    <property type="entry name" value="THDP-binding"/>
</dbReference>
<dbReference type="InterPro" id="IPR012001">
    <property type="entry name" value="Thiamin_PyroP_enz_TPP-bd_dom"/>
</dbReference>
<dbReference type="InterPro" id="IPR011766">
    <property type="entry name" value="TPP_enzyme_TPP-bd"/>
</dbReference>
<dbReference type="NCBIfam" id="TIGR00173">
    <property type="entry name" value="menD"/>
    <property type="match status" value="1"/>
</dbReference>
<dbReference type="PANTHER" id="PTHR42916">
    <property type="entry name" value="2-SUCCINYL-5-ENOLPYRUVYL-6-HYDROXY-3-CYCLOHEXENE-1-CARBOXYLATE SYNTHASE"/>
    <property type="match status" value="1"/>
</dbReference>
<dbReference type="PANTHER" id="PTHR42916:SF1">
    <property type="entry name" value="PROTEIN PHYLLO, CHLOROPLASTIC"/>
    <property type="match status" value="1"/>
</dbReference>
<dbReference type="Pfam" id="PF02775">
    <property type="entry name" value="TPP_enzyme_C"/>
    <property type="match status" value="1"/>
</dbReference>
<dbReference type="Pfam" id="PF16582">
    <property type="entry name" value="TPP_enzyme_M_2"/>
    <property type="match status" value="1"/>
</dbReference>
<dbReference type="Pfam" id="PF02776">
    <property type="entry name" value="TPP_enzyme_N"/>
    <property type="match status" value="1"/>
</dbReference>
<dbReference type="PIRSF" id="PIRSF004983">
    <property type="entry name" value="MenD"/>
    <property type="match status" value="1"/>
</dbReference>
<dbReference type="SUPFAM" id="SSF52467">
    <property type="entry name" value="DHS-like NAD/FAD-binding domain"/>
    <property type="match status" value="1"/>
</dbReference>
<dbReference type="SUPFAM" id="SSF52518">
    <property type="entry name" value="Thiamin diphosphate-binding fold (THDP-binding)"/>
    <property type="match status" value="2"/>
</dbReference>
<accession>Q2S2V6</accession>
<proteinExistence type="inferred from homology"/>
<evidence type="ECO:0000255" key="1">
    <source>
        <dbReference type="HAMAP-Rule" id="MF_01659"/>
    </source>
</evidence>
<sequence>MAHQSWSVLDAPNPTYLWTQLLVEELVRNGVHTFFVAPGSRSTPLTVAIARHPEAESVLHVDERGAAFAALGVGRAARGPAAWVTTSGTAVANGLPAAVEASVDGVPMLLLTADRPPELRDTGANQTIDQVKIFGDYVRWQADVPPPSDEVDPAYVLTTADQALHQTLRAPAGPVHVNCMFRKPLEPVETEASVAVPTAVDAWARGTEPYTHYPTPAPSPPGPEVDALAETVRGTEHGLVVAGRLDSAAAADATRRLATHLGWPLIPDLTSRLRRGGREQPEQVPYGDLVLTSAAFREGHPPRAVLQVGGRFASKRLRLFLRDSAPEVWAVVRPDPSRIDPDHRVTHHVEAAVPAAVDALVARLEEGPRGTTWRDDWAGASERVGAVVQAHVQESDALTDPLVAALLTEEMPSEHALVAASSMPVRDLNRHAAPGGTGGPAFANRGASGIDGTVATAAGIAEGRDGPVTLLIGDLALQHDLNGLALLQDRPVVAIVVNNDGGGIFHFLPIRKHDEFDPYFTTPHGHDFEHAAALFDLPYHRPDSPSALRSAYAQACRSGESALIEVRTDRATNRQVHDRLEASVERAVEEG</sequence>
<organism>
    <name type="scientific">Salinibacter ruber (strain DSM 13855 / M31)</name>
    <dbReference type="NCBI Taxonomy" id="309807"/>
    <lineage>
        <taxon>Bacteria</taxon>
        <taxon>Pseudomonadati</taxon>
        <taxon>Rhodothermota</taxon>
        <taxon>Rhodothermia</taxon>
        <taxon>Rhodothermales</taxon>
        <taxon>Salinibacteraceae</taxon>
        <taxon>Salinibacter</taxon>
    </lineage>
</organism>
<protein>
    <recommendedName>
        <fullName evidence="1">2-succinyl-5-enolpyruvyl-6-hydroxy-3-cyclohexene-1-carboxylate synthase</fullName>
        <shortName evidence="1">SEPHCHC synthase</shortName>
        <ecNumber evidence="1">2.2.1.9</ecNumber>
    </recommendedName>
    <alternativeName>
        <fullName evidence="1">Menaquinone biosynthesis protein MenD</fullName>
    </alternativeName>
</protein>
<reference key="1">
    <citation type="journal article" date="2005" name="Proc. Natl. Acad. Sci. U.S.A.">
        <title>The genome of Salinibacter ruber: convergence and gene exchange among hyperhalophilic bacteria and archaea.</title>
        <authorList>
            <person name="Mongodin E.F."/>
            <person name="Nelson K.E."/>
            <person name="Daugherty S."/>
            <person name="DeBoy R.T."/>
            <person name="Wister J."/>
            <person name="Khouri H."/>
            <person name="Weidman J."/>
            <person name="Walsh D.A."/>
            <person name="Papke R.T."/>
            <person name="Sanchez Perez G."/>
            <person name="Sharma A.K."/>
            <person name="Nesbo C.L."/>
            <person name="MacLeod D."/>
            <person name="Bapteste E."/>
            <person name="Doolittle W.F."/>
            <person name="Charlebois R.L."/>
            <person name="Legault B."/>
            <person name="Rodriguez-Valera F."/>
        </authorList>
    </citation>
    <scope>NUCLEOTIDE SEQUENCE [LARGE SCALE GENOMIC DNA]</scope>
    <source>
        <strain>DSM 13855 / CECT 5946 / M31</strain>
    </source>
</reference>
<name>MEND_SALRD</name>
<comment type="function">
    <text evidence="1">Catalyzes the thiamine diphosphate-dependent decarboxylation of 2-oxoglutarate and the subsequent addition of the resulting succinic semialdehyde-thiamine pyrophosphate anion to isochorismate to yield 2-succinyl-5-enolpyruvyl-6-hydroxy-3-cyclohexene-1-carboxylate (SEPHCHC).</text>
</comment>
<comment type="catalytic activity">
    <reaction evidence="1">
        <text>isochorismate + 2-oxoglutarate + H(+) = 5-enolpyruvoyl-6-hydroxy-2-succinyl-cyclohex-3-ene-1-carboxylate + CO2</text>
        <dbReference type="Rhea" id="RHEA:25593"/>
        <dbReference type="ChEBI" id="CHEBI:15378"/>
        <dbReference type="ChEBI" id="CHEBI:16526"/>
        <dbReference type="ChEBI" id="CHEBI:16810"/>
        <dbReference type="ChEBI" id="CHEBI:29780"/>
        <dbReference type="ChEBI" id="CHEBI:58818"/>
        <dbReference type="EC" id="2.2.1.9"/>
    </reaction>
</comment>
<comment type="cofactor">
    <cofactor evidence="1">
        <name>Mg(2+)</name>
        <dbReference type="ChEBI" id="CHEBI:18420"/>
    </cofactor>
    <cofactor evidence="1">
        <name>Mn(2+)</name>
        <dbReference type="ChEBI" id="CHEBI:29035"/>
    </cofactor>
</comment>
<comment type="cofactor">
    <cofactor evidence="1">
        <name>thiamine diphosphate</name>
        <dbReference type="ChEBI" id="CHEBI:58937"/>
    </cofactor>
    <text evidence="1">Binds 1 thiamine pyrophosphate per subunit.</text>
</comment>
<comment type="pathway">
    <text evidence="1">Quinol/quinone metabolism; 1,4-dihydroxy-2-naphthoate biosynthesis; 1,4-dihydroxy-2-naphthoate from chorismate: step 2/7.</text>
</comment>
<comment type="pathway">
    <text evidence="1">Quinol/quinone metabolism; menaquinone biosynthesis.</text>
</comment>
<comment type="subunit">
    <text evidence="1">Homodimer.</text>
</comment>
<comment type="similarity">
    <text evidence="1">Belongs to the TPP enzyme family. MenD subfamily.</text>
</comment>
<keyword id="KW-0460">Magnesium</keyword>
<keyword id="KW-0464">Manganese</keyword>
<keyword id="KW-0474">Menaquinone biosynthesis</keyword>
<keyword id="KW-0479">Metal-binding</keyword>
<keyword id="KW-1185">Reference proteome</keyword>
<keyword id="KW-0786">Thiamine pyrophosphate</keyword>
<keyword id="KW-0808">Transferase</keyword>
<gene>
    <name evidence="1" type="primary">menD</name>
    <name type="ordered locus">SRU_1351</name>
</gene>